<reference key="1">
    <citation type="journal article" date="2007" name="Mol. Biol. Evol.">
        <title>Chloroplast genome (cpDNA) of Cycas taitungensis and 56 cp protein-coding genes of Gnetum parvifolium: insights into cpDNA evolution and phylogeny of extant seed plants.</title>
        <authorList>
            <person name="Wu C.-S."/>
            <person name="Wang Y.-N."/>
            <person name="Liu S.-M."/>
            <person name="Chaw S.-M."/>
        </authorList>
    </citation>
    <scope>NUCLEOTIDE SEQUENCE [LARGE SCALE GENOMIC DNA]</scope>
</reference>
<reference key="2">
    <citation type="journal article" date="2009" name="Mol. Phylogenet. Evol.">
        <title>Evolution of reduced and compact chloroplast genomes (cpDNAs) in gnetophytes: Selection toward a lower-cost strategy.</title>
        <authorList>
            <person name="Wu C.-S."/>
            <person name="Lai Y.-T."/>
            <person name="Lin C.-P."/>
            <person name="Wang Y.-N."/>
            <person name="Chaw S.-M."/>
        </authorList>
    </citation>
    <scope>NUCLEOTIDE SEQUENCE [LARGE SCALE GENOMIC DNA]</scope>
</reference>
<feature type="chain" id="PRO_0000322041" description="Photosystem I iron-sulfur center">
    <location>
        <begin position="1"/>
        <end position="81"/>
    </location>
</feature>
<feature type="domain" description="4Fe-4S ferredoxin-type 1" evidence="1">
    <location>
        <begin position="2"/>
        <end position="31"/>
    </location>
</feature>
<feature type="domain" description="4Fe-4S ferredoxin-type 2" evidence="1">
    <location>
        <begin position="39"/>
        <end position="68"/>
    </location>
</feature>
<feature type="binding site" evidence="1">
    <location>
        <position position="11"/>
    </location>
    <ligand>
        <name>[4Fe-4S] cluster</name>
        <dbReference type="ChEBI" id="CHEBI:49883"/>
        <label>1</label>
    </ligand>
</feature>
<feature type="binding site" evidence="1">
    <location>
        <position position="14"/>
    </location>
    <ligand>
        <name>[4Fe-4S] cluster</name>
        <dbReference type="ChEBI" id="CHEBI:49883"/>
        <label>1</label>
    </ligand>
</feature>
<feature type="binding site" evidence="1">
    <location>
        <position position="17"/>
    </location>
    <ligand>
        <name>[4Fe-4S] cluster</name>
        <dbReference type="ChEBI" id="CHEBI:49883"/>
        <label>1</label>
    </ligand>
</feature>
<feature type="binding site" evidence="1">
    <location>
        <position position="21"/>
    </location>
    <ligand>
        <name>[4Fe-4S] cluster</name>
        <dbReference type="ChEBI" id="CHEBI:49883"/>
        <label>2</label>
    </ligand>
</feature>
<feature type="binding site" evidence="1">
    <location>
        <position position="48"/>
    </location>
    <ligand>
        <name>[4Fe-4S] cluster</name>
        <dbReference type="ChEBI" id="CHEBI:49883"/>
        <label>2</label>
    </ligand>
</feature>
<feature type="binding site" evidence="1">
    <location>
        <position position="51"/>
    </location>
    <ligand>
        <name>[4Fe-4S] cluster</name>
        <dbReference type="ChEBI" id="CHEBI:49883"/>
        <label>2</label>
    </ligand>
</feature>
<feature type="binding site" evidence="1">
    <location>
        <position position="54"/>
    </location>
    <ligand>
        <name>[4Fe-4S] cluster</name>
        <dbReference type="ChEBI" id="CHEBI:49883"/>
        <label>2</label>
    </ligand>
</feature>
<feature type="binding site" evidence="1">
    <location>
        <position position="58"/>
    </location>
    <ligand>
        <name>[4Fe-4S] cluster</name>
        <dbReference type="ChEBI" id="CHEBI:49883"/>
        <label>1</label>
    </ligand>
</feature>
<accession>A6BM25</accession>
<accession>B7ZI70</accession>
<dbReference type="EC" id="1.97.1.12" evidence="1"/>
<dbReference type="EMBL" id="AB295921">
    <property type="protein sequence ID" value="BAF64870.1"/>
    <property type="molecule type" value="Genomic_DNA"/>
</dbReference>
<dbReference type="EMBL" id="AP009569">
    <property type="protein sequence ID" value="BAH11250.1"/>
    <property type="molecule type" value="Genomic_DNA"/>
</dbReference>
<dbReference type="RefSeq" id="YP_002519740.1">
    <property type="nucleotide sequence ID" value="NC_011942.1"/>
</dbReference>
<dbReference type="SMR" id="A6BM25"/>
<dbReference type="GeneID" id="7368217"/>
<dbReference type="GO" id="GO:0009535">
    <property type="term" value="C:chloroplast thylakoid membrane"/>
    <property type="evidence" value="ECO:0007669"/>
    <property type="project" value="UniProtKB-SubCell"/>
</dbReference>
<dbReference type="GO" id="GO:0009522">
    <property type="term" value="C:photosystem I"/>
    <property type="evidence" value="ECO:0007669"/>
    <property type="project" value="UniProtKB-KW"/>
</dbReference>
<dbReference type="GO" id="GO:0051539">
    <property type="term" value="F:4 iron, 4 sulfur cluster binding"/>
    <property type="evidence" value="ECO:0007669"/>
    <property type="project" value="UniProtKB-KW"/>
</dbReference>
<dbReference type="GO" id="GO:0009055">
    <property type="term" value="F:electron transfer activity"/>
    <property type="evidence" value="ECO:0007669"/>
    <property type="project" value="UniProtKB-UniRule"/>
</dbReference>
<dbReference type="GO" id="GO:0046872">
    <property type="term" value="F:metal ion binding"/>
    <property type="evidence" value="ECO:0007669"/>
    <property type="project" value="UniProtKB-KW"/>
</dbReference>
<dbReference type="GO" id="GO:0016491">
    <property type="term" value="F:oxidoreductase activity"/>
    <property type="evidence" value="ECO:0007669"/>
    <property type="project" value="UniProtKB-KW"/>
</dbReference>
<dbReference type="GO" id="GO:0009773">
    <property type="term" value="P:photosynthetic electron transport in photosystem I"/>
    <property type="evidence" value="ECO:0007669"/>
    <property type="project" value="InterPro"/>
</dbReference>
<dbReference type="FunFam" id="3.30.70.20:FF:000001">
    <property type="entry name" value="Photosystem I iron-sulfur center"/>
    <property type="match status" value="1"/>
</dbReference>
<dbReference type="Gene3D" id="3.30.70.20">
    <property type="match status" value="1"/>
</dbReference>
<dbReference type="HAMAP" id="MF_01303">
    <property type="entry name" value="PSI_PsaC"/>
    <property type="match status" value="1"/>
</dbReference>
<dbReference type="InterPro" id="IPR017896">
    <property type="entry name" value="4Fe4S_Fe-S-bd"/>
</dbReference>
<dbReference type="InterPro" id="IPR017900">
    <property type="entry name" value="4Fe4S_Fe_S_CS"/>
</dbReference>
<dbReference type="InterPro" id="IPR050157">
    <property type="entry name" value="PSI_iron-sulfur_center"/>
</dbReference>
<dbReference type="InterPro" id="IPR017491">
    <property type="entry name" value="PSI_PsaC"/>
</dbReference>
<dbReference type="NCBIfam" id="TIGR03048">
    <property type="entry name" value="PS_I_psaC"/>
    <property type="match status" value="1"/>
</dbReference>
<dbReference type="PANTHER" id="PTHR24960:SF79">
    <property type="entry name" value="PHOTOSYSTEM I IRON-SULFUR CENTER"/>
    <property type="match status" value="1"/>
</dbReference>
<dbReference type="PANTHER" id="PTHR24960">
    <property type="entry name" value="PHOTOSYSTEM I IRON-SULFUR CENTER-RELATED"/>
    <property type="match status" value="1"/>
</dbReference>
<dbReference type="Pfam" id="PF12838">
    <property type="entry name" value="Fer4_7"/>
    <property type="match status" value="1"/>
</dbReference>
<dbReference type="SUPFAM" id="SSF54862">
    <property type="entry name" value="4Fe-4S ferredoxins"/>
    <property type="match status" value="1"/>
</dbReference>
<dbReference type="PROSITE" id="PS00198">
    <property type="entry name" value="4FE4S_FER_1"/>
    <property type="match status" value="2"/>
</dbReference>
<dbReference type="PROSITE" id="PS51379">
    <property type="entry name" value="4FE4S_FER_2"/>
    <property type="match status" value="2"/>
</dbReference>
<organism>
    <name type="scientific">Gnetum parvifolium</name>
    <name type="common">Small-leaved jointfir</name>
    <name type="synonym">Gnetum scandens var. parvifolium</name>
    <dbReference type="NCBI Taxonomy" id="33153"/>
    <lineage>
        <taxon>Eukaryota</taxon>
        <taxon>Viridiplantae</taxon>
        <taxon>Streptophyta</taxon>
        <taxon>Embryophyta</taxon>
        <taxon>Tracheophyta</taxon>
        <taxon>Spermatophyta</taxon>
        <taxon>Gnetopsida</taxon>
        <taxon>Gnetidae</taxon>
        <taxon>Gnetales</taxon>
        <taxon>Gnetaceae</taxon>
        <taxon>Gnetum</taxon>
    </lineage>
</organism>
<keyword id="KW-0004">4Fe-4S</keyword>
<keyword id="KW-0150">Chloroplast</keyword>
<keyword id="KW-0249">Electron transport</keyword>
<keyword id="KW-0408">Iron</keyword>
<keyword id="KW-0411">Iron-sulfur</keyword>
<keyword id="KW-0472">Membrane</keyword>
<keyword id="KW-0479">Metal-binding</keyword>
<keyword id="KW-0560">Oxidoreductase</keyword>
<keyword id="KW-0602">Photosynthesis</keyword>
<keyword id="KW-0603">Photosystem I</keyword>
<keyword id="KW-0934">Plastid</keyword>
<keyword id="KW-0677">Repeat</keyword>
<keyword id="KW-0793">Thylakoid</keyword>
<keyword id="KW-0813">Transport</keyword>
<proteinExistence type="inferred from homology"/>
<gene>
    <name evidence="1" type="primary">psaC</name>
</gene>
<geneLocation type="chloroplast"/>
<name>PSAC_GNEPA</name>
<evidence type="ECO:0000255" key="1">
    <source>
        <dbReference type="HAMAP-Rule" id="MF_01303"/>
    </source>
</evidence>
<comment type="function">
    <text evidence="1">Apoprotein for the two 4Fe-4S centers FA and FB of photosystem I (PSI); essential for photochemical activity. FB is the terminal electron acceptor of PSI, donating electrons to ferredoxin. The C-terminus interacts with PsaA/B/D and helps assemble the protein into the PSI complex. Required for binding of PsaD and PsaE to PSI. PSI is a plastocyanin-ferredoxin oxidoreductase, converting photonic excitation into a charge separation, which transfers an electron from the donor P700 chlorophyll pair to the spectroscopically characterized acceptors A0, A1, FX, FA and FB in turn.</text>
</comment>
<comment type="catalytic activity">
    <reaction evidence="1">
        <text>reduced [plastocyanin] + hnu + oxidized [2Fe-2S]-[ferredoxin] = oxidized [plastocyanin] + reduced [2Fe-2S]-[ferredoxin]</text>
        <dbReference type="Rhea" id="RHEA:30407"/>
        <dbReference type="Rhea" id="RHEA-COMP:10000"/>
        <dbReference type="Rhea" id="RHEA-COMP:10001"/>
        <dbReference type="Rhea" id="RHEA-COMP:10039"/>
        <dbReference type="Rhea" id="RHEA-COMP:10040"/>
        <dbReference type="ChEBI" id="CHEBI:29036"/>
        <dbReference type="ChEBI" id="CHEBI:30212"/>
        <dbReference type="ChEBI" id="CHEBI:33737"/>
        <dbReference type="ChEBI" id="CHEBI:33738"/>
        <dbReference type="ChEBI" id="CHEBI:49552"/>
        <dbReference type="EC" id="1.97.1.12"/>
    </reaction>
</comment>
<comment type="cofactor">
    <cofactor evidence="1">
        <name>[4Fe-4S] cluster</name>
        <dbReference type="ChEBI" id="CHEBI:49883"/>
    </cofactor>
    <text evidence="1">Binds 2 [4Fe-4S] clusters. Cluster 2 is most probably the spectroscopically characterized electron acceptor FA and cluster 1 is most probably FB.</text>
</comment>
<comment type="subunit">
    <text evidence="1">The eukaryotic PSI reaction center is composed of at least 11 subunits.</text>
</comment>
<comment type="subcellular location">
    <subcellularLocation>
        <location evidence="1">Plastid</location>
        <location evidence="1">Chloroplast thylakoid membrane</location>
        <topology evidence="1">Peripheral membrane protein</topology>
        <orientation evidence="1">Stromal side</orientation>
    </subcellularLocation>
</comment>
<protein>
    <recommendedName>
        <fullName evidence="1">Photosystem I iron-sulfur center</fullName>
        <ecNumber evidence="1">1.97.1.12</ecNumber>
    </recommendedName>
    <alternativeName>
        <fullName evidence="1">9 kDa polypeptide</fullName>
    </alternativeName>
    <alternativeName>
        <fullName evidence="1">PSI-C</fullName>
    </alternativeName>
    <alternativeName>
        <fullName evidence="1">Photosystem I subunit VII</fullName>
    </alternativeName>
    <alternativeName>
        <fullName evidence="1">PsaC</fullName>
    </alternativeName>
</protein>
<sequence length="81" mass="8998">MAHSVKIYDTCIGCTQCVRACPTDVLEMVPWNGCRAKQIASAPRTEDCVGCKRCESACPTDYLSVRVYLRNETTRSMGLAY</sequence>